<organism>
    <name type="scientific">Oryza sativa subsp. japonica</name>
    <name type="common">Rice</name>
    <dbReference type="NCBI Taxonomy" id="39947"/>
    <lineage>
        <taxon>Eukaryota</taxon>
        <taxon>Viridiplantae</taxon>
        <taxon>Streptophyta</taxon>
        <taxon>Embryophyta</taxon>
        <taxon>Tracheophyta</taxon>
        <taxon>Spermatophyta</taxon>
        <taxon>Magnoliopsida</taxon>
        <taxon>Liliopsida</taxon>
        <taxon>Poales</taxon>
        <taxon>Poaceae</taxon>
        <taxon>BOP clade</taxon>
        <taxon>Oryzoideae</taxon>
        <taxon>Oryzeae</taxon>
        <taxon>Oryzinae</taxon>
        <taxon>Oryza</taxon>
        <taxon>Oryza sativa</taxon>
    </lineage>
</organism>
<comment type="catalytic activity">
    <reaction>
        <text>O-phospho-L-seryl-[protein] + H2O = L-seryl-[protein] + phosphate</text>
        <dbReference type="Rhea" id="RHEA:20629"/>
        <dbReference type="Rhea" id="RHEA-COMP:9863"/>
        <dbReference type="Rhea" id="RHEA-COMP:11604"/>
        <dbReference type="ChEBI" id="CHEBI:15377"/>
        <dbReference type="ChEBI" id="CHEBI:29999"/>
        <dbReference type="ChEBI" id="CHEBI:43474"/>
        <dbReference type="ChEBI" id="CHEBI:83421"/>
        <dbReference type="EC" id="3.1.3.16"/>
    </reaction>
</comment>
<comment type="catalytic activity">
    <reaction>
        <text>O-phospho-L-threonyl-[protein] + H2O = L-threonyl-[protein] + phosphate</text>
        <dbReference type="Rhea" id="RHEA:47004"/>
        <dbReference type="Rhea" id="RHEA-COMP:11060"/>
        <dbReference type="Rhea" id="RHEA-COMP:11605"/>
        <dbReference type="ChEBI" id="CHEBI:15377"/>
        <dbReference type="ChEBI" id="CHEBI:30013"/>
        <dbReference type="ChEBI" id="CHEBI:43474"/>
        <dbReference type="ChEBI" id="CHEBI:61977"/>
        <dbReference type="EC" id="3.1.3.16"/>
    </reaction>
</comment>
<comment type="cofactor">
    <cofactor evidence="1">
        <name>Mg(2+)</name>
        <dbReference type="ChEBI" id="CHEBI:18420"/>
    </cofactor>
    <cofactor evidence="1">
        <name>Mn(2+)</name>
        <dbReference type="ChEBI" id="CHEBI:29035"/>
    </cofactor>
    <text evidence="1">Binds 2 magnesium or manganese ions per subunit.</text>
</comment>
<comment type="similarity">
    <text evidence="4">Belongs to the PP2C family.</text>
</comment>
<comment type="sequence caution" evidence="4">
    <conflict type="erroneous gene model prediction">
        <sequence resource="EMBL-CDS" id="BAD73079"/>
    </conflict>
</comment>
<comment type="sequence caution" evidence="4">
    <conflict type="erroneous gene model prediction">
        <sequence resource="EMBL-CDS" id="BAD73271"/>
    </conflict>
</comment>
<comment type="sequence caution" evidence="4">
    <conflict type="erroneous gene model prediction">
        <sequence resource="EMBL-CDS" id="BAF05094"/>
    </conflict>
</comment>
<sequence length="485" mass="51616">MSSPSPSSEAAAAHHHHHQRRQHAGAAGGSGLVPLAALIKEEARAERPMGSGSRICARDEEDGGGGGGAEGGRRWRRPLLRYGCAAQSKKGEDFFLLRTDCARPSTSSSSSSSLASSPPHTFAVFAVLDGHNGNAAAIYTRDNLLNHVLSAMPRGLSREEWLHALPRALVAGFVKTDKEFQHKGQTSGTTATFVIIDGWTITVASVGDSRCILDAQGGAVSLLTVDHRLEENVEERERVTASGGEVGRLSVVGGAEIGPLRCWPGGLCLSRSIGDIDVGEFIVPVPYVKQVKLSNAGGRLIIASDGIWDALSSEAAAKCCRGLPAELAAKQVVKEALRTRGLKDDTTCIVVDMIPPDQTIRHPSPPKKINKLKSLIFRKKTKDHPNKLTKQLSAAGMVEELFEEGSAMLSERLGNDSSGRRTSSSLFTCAICQVDLEPSEGISVHAGSIFSSSSSKPWEGPFLCSDCRDKKDAMEGKRPSGVKVL</sequence>
<name>P2C03_ORYSJ</name>
<evidence type="ECO:0000250" key="1"/>
<evidence type="ECO:0000255" key="2">
    <source>
        <dbReference type="PROSITE-ProRule" id="PRU01082"/>
    </source>
</evidence>
<evidence type="ECO:0000256" key="3">
    <source>
        <dbReference type="SAM" id="MobiDB-lite"/>
    </source>
</evidence>
<evidence type="ECO:0000305" key="4"/>
<accession>Q0JMD4</accession>
<accession>A2ZTQ7</accession>
<accession>Q5QMT7</accession>
<feature type="chain" id="PRO_0000363249" description="Probable protein phosphatase 2C 3">
    <location>
        <begin position="1"/>
        <end position="485"/>
    </location>
</feature>
<feature type="domain" description="PPM-type phosphatase" evidence="2">
    <location>
        <begin position="107"/>
        <end position="353"/>
    </location>
</feature>
<feature type="region of interest" description="Disordered" evidence="3">
    <location>
        <begin position="1"/>
        <end position="29"/>
    </location>
</feature>
<feature type="region of interest" description="Disordered" evidence="3">
    <location>
        <begin position="43"/>
        <end position="72"/>
    </location>
</feature>
<feature type="compositionally biased region" description="Low complexity" evidence="3">
    <location>
        <begin position="1"/>
        <end position="11"/>
    </location>
</feature>
<feature type="compositionally biased region" description="Basic residues" evidence="3">
    <location>
        <begin position="13"/>
        <end position="23"/>
    </location>
</feature>
<feature type="binding site" evidence="1">
    <location>
        <position position="129"/>
    </location>
    <ligand>
        <name>Mn(2+)</name>
        <dbReference type="ChEBI" id="CHEBI:29035"/>
        <label>1</label>
    </ligand>
</feature>
<feature type="binding site" evidence="1">
    <location>
        <position position="129"/>
    </location>
    <ligand>
        <name>Mn(2+)</name>
        <dbReference type="ChEBI" id="CHEBI:29035"/>
        <label>2</label>
    </ligand>
</feature>
<feature type="binding site" evidence="1">
    <location>
        <position position="130"/>
    </location>
    <ligand>
        <name>Mn(2+)</name>
        <dbReference type="ChEBI" id="CHEBI:29035"/>
        <label>1</label>
    </ligand>
</feature>
<feature type="binding site" evidence="1">
    <location>
        <position position="305"/>
    </location>
    <ligand>
        <name>Mn(2+)</name>
        <dbReference type="ChEBI" id="CHEBI:29035"/>
        <label>2</label>
    </ligand>
</feature>
<feature type="binding site" evidence="1">
    <location>
        <position position="344"/>
    </location>
    <ligand>
        <name>Mn(2+)</name>
        <dbReference type="ChEBI" id="CHEBI:29035"/>
        <label>2</label>
    </ligand>
</feature>
<feature type="sequence conflict" description="In Ref. 6; AK059183." evidence="4" ref="6">
    <original>V</original>
    <variation>A</variation>
    <location>
        <position position="350"/>
    </location>
</feature>
<gene>
    <name type="ordered locus">Os01g0513100</name>
    <name type="ordered locus">LOC_Os01g32964</name>
    <name type="ORF">OsJ_001929</name>
    <name type="ORF">OSJNBa0054L14.32</name>
    <name type="ORF">P0504D03.18</name>
</gene>
<proteinExistence type="evidence at transcript level"/>
<keyword id="KW-0378">Hydrolase</keyword>
<keyword id="KW-0460">Magnesium</keyword>
<keyword id="KW-0464">Manganese</keyword>
<keyword id="KW-0479">Metal-binding</keyword>
<keyword id="KW-0904">Protein phosphatase</keyword>
<keyword id="KW-1185">Reference proteome</keyword>
<reference key="1">
    <citation type="journal article" date="2002" name="Nature">
        <title>The genome sequence and structure of rice chromosome 1.</title>
        <authorList>
            <person name="Sasaki T."/>
            <person name="Matsumoto T."/>
            <person name="Yamamoto K."/>
            <person name="Sakata K."/>
            <person name="Baba T."/>
            <person name="Katayose Y."/>
            <person name="Wu J."/>
            <person name="Niimura Y."/>
            <person name="Cheng Z."/>
            <person name="Nagamura Y."/>
            <person name="Antonio B.A."/>
            <person name="Kanamori H."/>
            <person name="Hosokawa S."/>
            <person name="Masukawa M."/>
            <person name="Arikawa K."/>
            <person name="Chiden Y."/>
            <person name="Hayashi M."/>
            <person name="Okamoto M."/>
            <person name="Ando T."/>
            <person name="Aoki H."/>
            <person name="Arita K."/>
            <person name="Hamada M."/>
            <person name="Harada C."/>
            <person name="Hijishita S."/>
            <person name="Honda M."/>
            <person name="Ichikawa Y."/>
            <person name="Idonuma A."/>
            <person name="Iijima M."/>
            <person name="Ikeda M."/>
            <person name="Ikeno M."/>
            <person name="Ito S."/>
            <person name="Ito T."/>
            <person name="Ito Y."/>
            <person name="Ito Y."/>
            <person name="Iwabuchi A."/>
            <person name="Kamiya K."/>
            <person name="Karasawa W."/>
            <person name="Katagiri S."/>
            <person name="Kikuta A."/>
            <person name="Kobayashi N."/>
            <person name="Kono I."/>
            <person name="Machita K."/>
            <person name="Maehara T."/>
            <person name="Mizuno H."/>
            <person name="Mizubayashi T."/>
            <person name="Mukai Y."/>
            <person name="Nagasaki H."/>
            <person name="Nakashima M."/>
            <person name="Nakama Y."/>
            <person name="Nakamichi Y."/>
            <person name="Nakamura M."/>
            <person name="Namiki N."/>
            <person name="Negishi M."/>
            <person name="Ohta I."/>
            <person name="Ono N."/>
            <person name="Saji S."/>
            <person name="Sakai K."/>
            <person name="Shibata M."/>
            <person name="Shimokawa T."/>
            <person name="Shomura A."/>
            <person name="Song J."/>
            <person name="Takazaki Y."/>
            <person name="Terasawa K."/>
            <person name="Tsuji K."/>
            <person name="Waki K."/>
            <person name="Yamagata H."/>
            <person name="Yamane H."/>
            <person name="Yoshiki S."/>
            <person name="Yoshihara R."/>
            <person name="Yukawa K."/>
            <person name="Zhong H."/>
            <person name="Iwama H."/>
            <person name="Endo T."/>
            <person name="Ito H."/>
            <person name="Hahn J.H."/>
            <person name="Kim H.-I."/>
            <person name="Eun M.-Y."/>
            <person name="Yano M."/>
            <person name="Jiang J."/>
            <person name="Gojobori T."/>
        </authorList>
    </citation>
    <scope>NUCLEOTIDE SEQUENCE [LARGE SCALE GENOMIC DNA]</scope>
    <source>
        <strain>cv. Nipponbare</strain>
    </source>
</reference>
<reference key="2">
    <citation type="journal article" date="2005" name="Nature">
        <title>The map-based sequence of the rice genome.</title>
        <authorList>
            <consortium name="International rice genome sequencing project (IRGSP)"/>
        </authorList>
    </citation>
    <scope>NUCLEOTIDE SEQUENCE [LARGE SCALE GENOMIC DNA]</scope>
    <source>
        <strain>cv. Nipponbare</strain>
    </source>
</reference>
<reference key="3">
    <citation type="journal article" date="2008" name="Nucleic Acids Res.">
        <title>The rice annotation project database (RAP-DB): 2008 update.</title>
        <authorList>
            <consortium name="The rice annotation project (RAP)"/>
        </authorList>
    </citation>
    <scope>GENOME REANNOTATION</scope>
    <source>
        <strain>cv. Nipponbare</strain>
    </source>
</reference>
<reference key="4">
    <citation type="journal article" date="2013" name="Rice">
        <title>Improvement of the Oryza sativa Nipponbare reference genome using next generation sequence and optical map data.</title>
        <authorList>
            <person name="Kawahara Y."/>
            <person name="de la Bastide M."/>
            <person name="Hamilton J.P."/>
            <person name="Kanamori H."/>
            <person name="McCombie W.R."/>
            <person name="Ouyang S."/>
            <person name="Schwartz D.C."/>
            <person name="Tanaka T."/>
            <person name="Wu J."/>
            <person name="Zhou S."/>
            <person name="Childs K.L."/>
            <person name="Davidson R.M."/>
            <person name="Lin H."/>
            <person name="Quesada-Ocampo L."/>
            <person name="Vaillancourt B."/>
            <person name="Sakai H."/>
            <person name="Lee S.S."/>
            <person name="Kim J."/>
            <person name="Numa H."/>
            <person name="Itoh T."/>
            <person name="Buell C.R."/>
            <person name="Matsumoto T."/>
        </authorList>
    </citation>
    <scope>GENOME REANNOTATION</scope>
    <source>
        <strain>cv. Nipponbare</strain>
    </source>
</reference>
<reference key="5">
    <citation type="journal article" date="2005" name="PLoS Biol.">
        <title>The genomes of Oryza sativa: a history of duplications.</title>
        <authorList>
            <person name="Yu J."/>
            <person name="Wang J."/>
            <person name="Lin W."/>
            <person name="Li S."/>
            <person name="Li H."/>
            <person name="Zhou J."/>
            <person name="Ni P."/>
            <person name="Dong W."/>
            <person name="Hu S."/>
            <person name="Zeng C."/>
            <person name="Zhang J."/>
            <person name="Zhang Y."/>
            <person name="Li R."/>
            <person name="Xu Z."/>
            <person name="Li S."/>
            <person name="Li X."/>
            <person name="Zheng H."/>
            <person name="Cong L."/>
            <person name="Lin L."/>
            <person name="Yin J."/>
            <person name="Geng J."/>
            <person name="Li G."/>
            <person name="Shi J."/>
            <person name="Liu J."/>
            <person name="Lv H."/>
            <person name="Li J."/>
            <person name="Wang J."/>
            <person name="Deng Y."/>
            <person name="Ran L."/>
            <person name="Shi X."/>
            <person name="Wang X."/>
            <person name="Wu Q."/>
            <person name="Li C."/>
            <person name="Ren X."/>
            <person name="Wang J."/>
            <person name="Wang X."/>
            <person name="Li D."/>
            <person name="Liu D."/>
            <person name="Zhang X."/>
            <person name="Ji Z."/>
            <person name="Zhao W."/>
            <person name="Sun Y."/>
            <person name="Zhang Z."/>
            <person name="Bao J."/>
            <person name="Han Y."/>
            <person name="Dong L."/>
            <person name="Ji J."/>
            <person name="Chen P."/>
            <person name="Wu S."/>
            <person name="Liu J."/>
            <person name="Xiao Y."/>
            <person name="Bu D."/>
            <person name="Tan J."/>
            <person name="Yang L."/>
            <person name="Ye C."/>
            <person name="Zhang J."/>
            <person name="Xu J."/>
            <person name="Zhou Y."/>
            <person name="Yu Y."/>
            <person name="Zhang B."/>
            <person name="Zhuang S."/>
            <person name="Wei H."/>
            <person name="Liu B."/>
            <person name="Lei M."/>
            <person name="Yu H."/>
            <person name="Li Y."/>
            <person name="Xu H."/>
            <person name="Wei S."/>
            <person name="He X."/>
            <person name="Fang L."/>
            <person name="Zhang Z."/>
            <person name="Zhang Y."/>
            <person name="Huang X."/>
            <person name="Su Z."/>
            <person name="Tong W."/>
            <person name="Li J."/>
            <person name="Tong Z."/>
            <person name="Li S."/>
            <person name="Ye J."/>
            <person name="Wang L."/>
            <person name="Fang L."/>
            <person name="Lei T."/>
            <person name="Chen C.-S."/>
            <person name="Chen H.-C."/>
            <person name="Xu Z."/>
            <person name="Li H."/>
            <person name="Huang H."/>
            <person name="Zhang F."/>
            <person name="Xu H."/>
            <person name="Li N."/>
            <person name="Zhao C."/>
            <person name="Li S."/>
            <person name="Dong L."/>
            <person name="Huang Y."/>
            <person name="Li L."/>
            <person name="Xi Y."/>
            <person name="Qi Q."/>
            <person name="Li W."/>
            <person name="Zhang B."/>
            <person name="Hu W."/>
            <person name="Zhang Y."/>
            <person name="Tian X."/>
            <person name="Jiao Y."/>
            <person name="Liang X."/>
            <person name="Jin J."/>
            <person name="Gao L."/>
            <person name="Zheng W."/>
            <person name="Hao B."/>
            <person name="Liu S.-M."/>
            <person name="Wang W."/>
            <person name="Yuan L."/>
            <person name="Cao M."/>
            <person name="McDermott J."/>
            <person name="Samudrala R."/>
            <person name="Wang J."/>
            <person name="Wong G.K.-S."/>
            <person name="Yang H."/>
        </authorList>
    </citation>
    <scope>NUCLEOTIDE SEQUENCE [LARGE SCALE GENOMIC DNA]</scope>
    <source>
        <strain>cv. Nipponbare</strain>
    </source>
</reference>
<reference key="6">
    <citation type="journal article" date="2003" name="Science">
        <title>Collection, mapping, and annotation of over 28,000 cDNA clones from japonica rice.</title>
        <authorList>
            <consortium name="The rice full-length cDNA consortium"/>
        </authorList>
    </citation>
    <scope>NUCLEOTIDE SEQUENCE [LARGE SCALE MRNA] OF 334-485</scope>
    <source>
        <strain>cv. Nipponbare</strain>
    </source>
</reference>
<reference key="7">
    <citation type="journal article" date="2008" name="BMC Genomics">
        <title>Genome-wide and expression analysis of protein phosphatase 2C in rice and Arabidopsis.</title>
        <authorList>
            <person name="Xue T."/>
            <person name="Wang D."/>
            <person name="Zhang S."/>
            <person name="Ehlting J."/>
            <person name="Ni F."/>
            <person name="Jacab S."/>
            <person name="Zheng C."/>
            <person name="Zhong Y."/>
        </authorList>
    </citation>
    <scope>GENE FAMILY</scope>
    <scope>NOMENCLATURE</scope>
</reference>
<dbReference type="EC" id="3.1.3.16"/>
<dbReference type="EMBL" id="AP002970">
    <property type="protein sequence ID" value="BAD73079.1"/>
    <property type="status" value="ALT_SEQ"/>
    <property type="molecule type" value="Genomic_DNA"/>
</dbReference>
<dbReference type="EMBL" id="AP003213">
    <property type="protein sequence ID" value="BAD73271.1"/>
    <property type="status" value="ALT_SEQ"/>
    <property type="molecule type" value="Genomic_DNA"/>
</dbReference>
<dbReference type="EMBL" id="AP008207">
    <property type="protein sequence ID" value="BAF05094.2"/>
    <property type="status" value="ALT_SEQ"/>
    <property type="molecule type" value="Genomic_DNA"/>
</dbReference>
<dbReference type="EMBL" id="AP014957">
    <property type="status" value="NOT_ANNOTATED_CDS"/>
    <property type="molecule type" value="Genomic_DNA"/>
</dbReference>
<dbReference type="EMBL" id="CM000138">
    <property type="status" value="NOT_ANNOTATED_CDS"/>
    <property type="molecule type" value="Genomic_DNA"/>
</dbReference>
<dbReference type="EMBL" id="AK059183">
    <property type="status" value="NOT_ANNOTATED_CDS"/>
    <property type="molecule type" value="mRNA"/>
</dbReference>
<dbReference type="SMR" id="Q0JMD4"/>
<dbReference type="FunCoup" id="Q0JMD4">
    <property type="interactions" value="351"/>
</dbReference>
<dbReference type="STRING" id="39947.Q0JMD4"/>
<dbReference type="PaxDb" id="39947-Q0JMD4"/>
<dbReference type="GeneID" id="4323983"/>
<dbReference type="KEGG" id="dosa:Os01g0513100"/>
<dbReference type="KEGG" id="osa:4323983"/>
<dbReference type="eggNOG" id="KOG0698">
    <property type="taxonomic scope" value="Eukaryota"/>
</dbReference>
<dbReference type="InParanoid" id="Q0JMD4"/>
<dbReference type="OrthoDB" id="10264738at2759"/>
<dbReference type="Proteomes" id="UP000000763">
    <property type="component" value="Chromosome 1"/>
</dbReference>
<dbReference type="Proteomes" id="UP000007752">
    <property type="component" value="Chromosome 1"/>
</dbReference>
<dbReference type="Proteomes" id="UP000059680">
    <property type="component" value="Chromosome 1"/>
</dbReference>
<dbReference type="GO" id="GO:0046872">
    <property type="term" value="F:metal ion binding"/>
    <property type="evidence" value="ECO:0007669"/>
    <property type="project" value="UniProtKB-KW"/>
</dbReference>
<dbReference type="GO" id="GO:0004722">
    <property type="term" value="F:protein serine/threonine phosphatase activity"/>
    <property type="evidence" value="ECO:0000318"/>
    <property type="project" value="GO_Central"/>
</dbReference>
<dbReference type="GO" id="GO:1902531">
    <property type="term" value="P:regulation of intracellular signal transduction"/>
    <property type="evidence" value="ECO:0000318"/>
    <property type="project" value="GO_Central"/>
</dbReference>
<dbReference type="CDD" id="cd00143">
    <property type="entry name" value="PP2Cc"/>
    <property type="match status" value="1"/>
</dbReference>
<dbReference type="FunFam" id="3.60.40.10:FF:000013">
    <property type="entry name" value="probable protein phosphatase 2C 5"/>
    <property type="match status" value="1"/>
</dbReference>
<dbReference type="Gene3D" id="3.60.40.10">
    <property type="entry name" value="PPM-type phosphatase domain"/>
    <property type="match status" value="1"/>
</dbReference>
<dbReference type="InterPro" id="IPR015655">
    <property type="entry name" value="PP2C"/>
</dbReference>
<dbReference type="InterPro" id="IPR036457">
    <property type="entry name" value="PPM-type-like_dom_sf"/>
</dbReference>
<dbReference type="InterPro" id="IPR001932">
    <property type="entry name" value="PPM-type_phosphatase-like_dom"/>
</dbReference>
<dbReference type="PANTHER" id="PTHR47992">
    <property type="entry name" value="PROTEIN PHOSPHATASE"/>
    <property type="match status" value="1"/>
</dbReference>
<dbReference type="Pfam" id="PF00481">
    <property type="entry name" value="PP2C"/>
    <property type="match status" value="1"/>
</dbReference>
<dbReference type="SMART" id="SM00331">
    <property type="entry name" value="PP2C_SIG"/>
    <property type="match status" value="1"/>
</dbReference>
<dbReference type="SMART" id="SM00332">
    <property type="entry name" value="PP2Cc"/>
    <property type="match status" value="1"/>
</dbReference>
<dbReference type="SUPFAM" id="SSF81606">
    <property type="entry name" value="PP2C-like"/>
    <property type="match status" value="1"/>
</dbReference>
<dbReference type="PROSITE" id="PS51746">
    <property type="entry name" value="PPM_2"/>
    <property type="match status" value="1"/>
</dbReference>
<protein>
    <recommendedName>
        <fullName>Probable protein phosphatase 2C 3</fullName>
        <shortName>OsPP2C03</shortName>
        <ecNumber>3.1.3.16</ecNumber>
    </recommendedName>
</protein>